<accession>A0A125QXJ1</accession>
<dbReference type="EC" id="7.6.2.5" evidence="3"/>
<dbReference type="EMBL" id="KU244541">
    <property type="protein sequence ID" value="AMA11216.1"/>
    <property type="molecule type" value="mRNA"/>
</dbReference>
<dbReference type="SMR" id="A0A125QXJ1"/>
<dbReference type="Proteomes" id="UP000189706">
    <property type="component" value="Unplaced"/>
</dbReference>
<dbReference type="GO" id="GO:0031901">
    <property type="term" value="C:early endosome membrane"/>
    <property type="evidence" value="ECO:0007669"/>
    <property type="project" value="UniProtKB-SubCell"/>
</dbReference>
<dbReference type="GO" id="GO:0036020">
    <property type="term" value="C:endolysosome membrane"/>
    <property type="evidence" value="ECO:0000250"/>
    <property type="project" value="UniProtKB"/>
</dbReference>
<dbReference type="GO" id="GO:0005789">
    <property type="term" value="C:endoplasmic reticulum membrane"/>
    <property type="evidence" value="ECO:0000250"/>
    <property type="project" value="UniProtKB"/>
</dbReference>
<dbReference type="GO" id="GO:0005576">
    <property type="term" value="C:extracellular region"/>
    <property type="evidence" value="ECO:0007669"/>
    <property type="project" value="UniProtKB-SubCell"/>
</dbReference>
<dbReference type="GO" id="GO:0005794">
    <property type="term" value="C:Golgi apparatus"/>
    <property type="evidence" value="ECO:0000250"/>
    <property type="project" value="UniProtKB"/>
</dbReference>
<dbReference type="GO" id="GO:0000139">
    <property type="term" value="C:Golgi membrane"/>
    <property type="evidence" value="ECO:0007669"/>
    <property type="project" value="UniProtKB-SubCell"/>
</dbReference>
<dbReference type="GO" id="GO:0005765">
    <property type="term" value="C:lysosomal membrane"/>
    <property type="evidence" value="ECO:0000250"/>
    <property type="project" value="UniProtKB"/>
</dbReference>
<dbReference type="GO" id="GO:0033162">
    <property type="term" value="C:melanosome membrane"/>
    <property type="evidence" value="ECO:0007669"/>
    <property type="project" value="UniProtKB-SubCell"/>
</dbReference>
<dbReference type="GO" id="GO:0005741">
    <property type="term" value="C:mitochondrial outer membrane"/>
    <property type="evidence" value="ECO:0007669"/>
    <property type="project" value="UniProtKB-SubCell"/>
</dbReference>
<dbReference type="GO" id="GO:0032585">
    <property type="term" value="C:multivesicular body membrane"/>
    <property type="evidence" value="ECO:0007669"/>
    <property type="project" value="UniProtKB-SubCell"/>
</dbReference>
<dbReference type="GO" id="GO:0005886">
    <property type="term" value="C:plasma membrane"/>
    <property type="evidence" value="ECO:0000250"/>
    <property type="project" value="UniProtKB"/>
</dbReference>
<dbReference type="GO" id="GO:0015439">
    <property type="term" value="F:ABC-type heme transporter activity"/>
    <property type="evidence" value="ECO:0007669"/>
    <property type="project" value="UniProtKB-EC"/>
</dbReference>
<dbReference type="GO" id="GO:0140359">
    <property type="term" value="F:ABC-type transporter activity"/>
    <property type="evidence" value="ECO:0000250"/>
    <property type="project" value="UniProtKB"/>
</dbReference>
<dbReference type="GO" id="GO:0005524">
    <property type="term" value="F:ATP binding"/>
    <property type="evidence" value="ECO:0000250"/>
    <property type="project" value="UniProtKB"/>
</dbReference>
<dbReference type="GO" id="GO:0016887">
    <property type="term" value="F:ATP hydrolysis activity"/>
    <property type="evidence" value="ECO:0000250"/>
    <property type="project" value="UniProtKB"/>
</dbReference>
<dbReference type="GO" id="GO:0020037">
    <property type="term" value="F:heme binding"/>
    <property type="evidence" value="ECO:0007669"/>
    <property type="project" value="TreeGrafter"/>
</dbReference>
<dbReference type="GO" id="GO:0098849">
    <property type="term" value="P:cellular detoxification of cadmium ion"/>
    <property type="evidence" value="ECO:0000250"/>
    <property type="project" value="UniProtKB"/>
</dbReference>
<dbReference type="GO" id="GO:0042168">
    <property type="term" value="P:heme metabolic process"/>
    <property type="evidence" value="ECO:0000250"/>
    <property type="project" value="UniProtKB"/>
</dbReference>
<dbReference type="GO" id="GO:0035351">
    <property type="term" value="P:heme transmembrane transport"/>
    <property type="evidence" value="ECO:0000250"/>
    <property type="project" value="UniProtKB"/>
</dbReference>
<dbReference type="GO" id="GO:0006778">
    <property type="term" value="P:porphyrin-containing compound metabolic process"/>
    <property type="evidence" value="ECO:0000250"/>
    <property type="project" value="UniProtKB"/>
</dbReference>
<dbReference type="CDD" id="cd18581">
    <property type="entry name" value="ABC_6TM_ABCB6"/>
    <property type="match status" value="1"/>
</dbReference>
<dbReference type="CDD" id="cd03253">
    <property type="entry name" value="ABCC_ATM1_transporter"/>
    <property type="match status" value="1"/>
</dbReference>
<dbReference type="FunFam" id="1.20.1560.10:FF:000022">
    <property type="entry name" value="ATP-binding cassette sub-family B member 6, mitochondrial"/>
    <property type="match status" value="1"/>
</dbReference>
<dbReference type="FunFam" id="3.40.50.300:FF:000186">
    <property type="entry name" value="ATP-binding cassette sub-family B member 7, mitochondrial"/>
    <property type="match status" value="1"/>
</dbReference>
<dbReference type="Gene3D" id="1.20.1560.10">
    <property type="entry name" value="ABC transporter type 1, transmembrane domain"/>
    <property type="match status" value="1"/>
</dbReference>
<dbReference type="Gene3D" id="3.40.50.300">
    <property type="entry name" value="P-loop containing nucleotide triphosphate hydrolases"/>
    <property type="match status" value="1"/>
</dbReference>
<dbReference type="InterPro" id="IPR003593">
    <property type="entry name" value="AAA+_ATPase"/>
</dbReference>
<dbReference type="InterPro" id="IPR011527">
    <property type="entry name" value="ABC1_TM_dom"/>
</dbReference>
<dbReference type="InterPro" id="IPR036640">
    <property type="entry name" value="ABC1_TM_sf"/>
</dbReference>
<dbReference type="InterPro" id="IPR003439">
    <property type="entry name" value="ABC_transporter-like_ATP-bd"/>
</dbReference>
<dbReference type="InterPro" id="IPR017871">
    <property type="entry name" value="ABC_transporter-like_CS"/>
</dbReference>
<dbReference type="InterPro" id="IPR032410">
    <property type="entry name" value="ABCB6_N"/>
</dbReference>
<dbReference type="InterPro" id="IPR027417">
    <property type="entry name" value="P-loop_NTPase"/>
</dbReference>
<dbReference type="InterPro" id="IPR039421">
    <property type="entry name" value="Type_1_exporter"/>
</dbReference>
<dbReference type="PANTHER" id="PTHR24221">
    <property type="entry name" value="ATP-BINDING CASSETTE SUB-FAMILY B"/>
    <property type="match status" value="1"/>
</dbReference>
<dbReference type="PANTHER" id="PTHR24221:SF654">
    <property type="entry name" value="ATP-BINDING CASSETTE SUB-FAMILY B MEMBER 6"/>
    <property type="match status" value="1"/>
</dbReference>
<dbReference type="Pfam" id="PF00664">
    <property type="entry name" value="ABC_membrane"/>
    <property type="match status" value="1"/>
</dbReference>
<dbReference type="Pfam" id="PF00005">
    <property type="entry name" value="ABC_tran"/>
    <property type="match status" value="1"/>
</dbReference>
<dbReference type="Pfam" id="PF16185">
    <property type="entry name" value="MTABC_N"/>
    <property type="match status" value="1"/>
</dbReference>
<dbReference type="SMART" id="SM00382">
    <property type="entry name" value="AAA"/>
    <property type="match status" value="1"/>
</dbReference>
<dbReference type="SUPFAM" id="SSF90123">
    <property type="entry name" value="ABC transporter transmembrane region"/>
    <property type="match status" value="1"/>
</dbReference>
<dbReference type="SUPFAM" id="SSF52540">
    <property type="entry name" value="P-loop containing nucleoside triphosphate hydrolases"/>
    <property type="match status" value="1"/>
</dbReference>
<dbReference type="PROSITE" id="PS50929">
    <property type="entry name" value="ABC_TM1F"/>
    <property type="match status" value="1"/>
</dbReference>
<dbReference type="PROSITE" id="PS00211">
    <property type="entry name" value="ABC_TRANSPORTER_1"/>
    <property type="match status" value="1"/>
</dbReference>
<dbReference type="PROSITE" id="PS50893">
    <property type="entry name" value="ABC_TRANSPORTER_2"/>
    <property type="match status" value="1"/>
</dbReference>
<feature type="chain" id="PRO_0000452718" description="ATP-binding cassette sub-family B member 6">
    <location>
        <begin position="1"/>
        <end position="842"/>
    </location>
</feature>
<feature type="topological domain" description="Lumenal" evidence="3">
    <location>
        <begin position="1"/>
        <end position="26"/>
    </location>
</feature>
<feature type="transmembrane region" description="Helical" evidence="4">
    <location>
        <begin position="27"/>
        <end position="47"/>
    </location>
</feature>
<feature type="topological domain" description="Cytoplasmic" evidence="8">
    <location>
        <begin position="48"/>
        <end position="72"/>
    </location>
</feature>
<feature type="transmembrane region" description="Helical" evidence="4">
    <location>
        <begin position="73"/>
        <end position="93"/>
    </location>
</feature>
<feature type="topological domain" description="Lumenal" evidence="3">
    <location>
        <begin position="94"/>
        <end position="106"/>
    </location>
</feature>
<feature type="transmembrane region" description="Helical" evidence="4">
    <location>
        <begin position="107"/>
        <end position="127"/>
    </location>
</feature>
<feature type="topological domain" description="Cytoplasmic" evidence="8">
    <location>
        <begin position="128"/>
        <end position="147"/>
    </location>
</feature>
<feature type="transmembrane region" description="Helical" evidence="4">
    <location>
        <begin position="148"/>
        <end position="168"/>
    </location>
</feature>
<feature type="topological domain" description="Lumenal" evidence="3">
    <location>
        <begin position="169"/>
        <end position="185"/>
    </location>
</feature>
<feature type="transmembrane region" description="Helical" evidence="4">
    <location>
        <begin position="186"/>
        <end position="206"/>
    </location>
</feature>
<feature type="topological domain" description="Cytoplasmic" evidence="8">
    <location>
        <begin position="207"/>
        <end position="263"/>
    </location>
</feature>
<feature type="transmembrane region" description="Helical" evidence="4 6">
    <location>
        <begin position="264"/>
        <end position="284"/>
    </location>
</feature>
<feature type="topological domain" description="Lumenal" evidence="3">
    <location>
        <begin position="285"/>
        <end position="305"/>
    </location>
</feature>
<feature type="transmembrane region" description="Helical" evidence="4 6">
    <location>
        <begin position="306"/>
        <end position="326"/>
    </location>
</feature>
<feature type="topological domain" description="Cytoplasmic" evidence="8">
    <location>
        <begin position="327"/>
        <end position="375"/>
    </location>
</feature>
<feature type="transmembrane region" description="Helical" evidence="4 6">
    <location>
        <begin position="376"/>
        <end position="396"/>
    </location>
</feature>
<feature type="topological domain" description="Lumenal" evidence="3">
    <location>
        <position position="397"/>
    </location>
</feature>
<feature type="transmembrane region" description="Helical" evidence="4 6">
    <location>
        <begin position="398"/>
        <end position="418"/>
    </location>
</feature>
<feature type="topological domain" description="Cytoplasmic" evidence="8">
    <location>
        <begin position="419"/>
        <end position="499"/>
    </location>
</feature>
<feature type="transmembrane region" description="Helical" evidence="4 6">
    <location>
        <begin position="500"/>
        <end position="520"/>
    </location>
</feature>
<feature type="topological domain" description="Lumenal" evidence="3">
    <location>
        <begin position="521"/>
        <end position="529"/>
    </location>
</feature>
<feature type="transmembrane region" description="Helical" evidence="4 6">
    <location>
        <begin position="530"/>
        <end position="550"/>
    </location>
</feature>
<feature type="topological domain" description="Cytoplasmic" evidence="8">
    <location>
        <begin position="551"/>
        <end position="842"/>
    </location>
</feature>
<feature type="domain" description="ABC transmembrane type-1" evidence="6">
    <location>
        <begin position="265"/>
        <end position="556"/>
    </location>
</feature>
<feature type="domain" description="ABC transporter" evidence="5">
    <location>
        <begin position="590"/>
        <end position="824"/>
    </location>
</feature>
<feature type="region of interest" description="Required for ATPase activity" evidence="3">
    <location>
        <begin position="1"/>
        <end position="236"/>
    </location>
</feature>
<feature type="region of interest" description="Required for the lysosomal targeting" evidence="3">
    <location>
        <begin position="1"/>
        <end position="205"/>
    </location>
</feature>
<feature type="binding site" evidence="5">
    <location>
        <begin position="623"/>
        <end position="630"/>
    </location>
    <ligand>
        <name>ATP</name>
        <dbReference type="ChEBI" id="CHEBI:30616"/>
    </ligand>
</feature>
<feature type="disulfide bond" evidence="3">
    <location>
        <begin position="8"/>
        <end position="26"/>
    </location>
</feature>
<organism>
    <name type="scientific">Mesocricetus auratus</name>
    <name type="common">Golden hamster</name>
    <dbReference type="NCBI Taxonomy" id="10036"/>
    <lineage>
        <taxon>Eukaryota</taxon>
        <taxon>Metazoa</taxon>
        <taxon>Chordata</taxon>
        <taxon>Craniata</taxon>
        <taxon>Vertebrata</taxon>
        <taxon>Euteleostomi</taxon>
        <taxon>Mammalia</taxon>
        <taxon>Eutheria</taxon>
        <taxon>Euarchontoglires</taxon>
        <taxon>Glires</taxon>
        <taxon>Rodentia</taxon>
        <taxon>Myomorpha</taxon>
        <taxon>Muroidea</taxon>
        <taxon>Cricetidae</taxon>
        <taxon>Cricetinae</taxon>
        <taxon>Mesocricetus</taxon>
    </lineage>
</organism>
<sequence length="842" mass="93746">MVTVGNYCEAEGPLGPAWAQNGLSPCFFFTLVPSTLMALGALALVLVLPCRRRDVPSGTEELFWAADSRVAPYALQLFLATLQVALPLAGLAGRVGTARGVRLPGYLLLASMLGSLASACGLWLLVAERRQARQSLAMGVWMKFRHSSGLLLLWTVAFAAENLALVSWNSPQWWWARADLGQQVQFGLWVLRYVISGGLFILGLWAPGLRPQSYTLRVHEADQDVERNQAQSTDRTSTWRDLGRKLRLLSSYLWPRGSPALQFIVLICLGLMGLDRALNVLVPIFYRDIVNLLTSKAPWSSLAWTVTTYVFLKFLQGGGTGSTGFVSNLRTFLWIRVQQFTSRGVELRLFSHLHELSLRWHLGRRTGEVLRVVDRGTSSVTGLLSYLVFNIIPTLADIIIGIIYFSMFFNAWFGLIVFLCMSLYLFLTIVVTEWRAKFRRAMNTQENITRARAVDSLLNFETVKYYNAEGYEVERYREAIIKYQGLEWKSSASLVVLNQTQNLVIGLGLLAGSLLCAYFVSEQKLQVGDFVLFGTYITQLYMPLNWFGTYYRMIQTNFIDMENMFDLLKEETEVKDVPGAGPLRFHKGQIEFENVHFSYADGRETLQDVSFTVMPGQTVALVGPSGAGKSTILRLLFRFYDISSGCIRIDGQDISQVTQISLRSHIGVVPQDTVLFNDTIANNIRYGRIAAGDSEVEAAAQAAGIHDAILSFPEGYETQVGERGLKLSGGEKQRVAIARTILKAPDIILLDEATSALDTSNERAIQASLAKVCTNRTTIVVAHRLSTVVSADQILVIKDGCIIERGRHEALLSQGGVYAEMWQLQQKGQETVSEDSKPQDIA</sequence>
<evidence type="ECO:0000250" key="1">
    <source>
        <dbReference type="UniProtKB" id="O70595"/>
    </source>
</evidence>
<evidence type="ECO:0000250" key="2">
    <source>
        <dbReference type="UniProtKB" id="Q9DC29"/>
    </source>
</evidence>
<evidence type="ECO:0000250" key="3">
    <source>
        <dbReference type="UniProtKB" id="Q9NP58"/>
    </source>
</evidence>
<evidence type="ECO:0000255" key="4"/>
<evidence type="ECO:0000255" key="5">
    <source>
        <dbReference type="PROSITE-ProRule" id="PRU00434"/>
    </source>
</evidence>
<evidence type="ECO:0000255" key="6">
    <source>
        <dbReference type="PROSITE-ProRule" id="PRU00441"/>
    </source>
</evidence>
<evidence type="ECO:0000269" key="7">
    <source>
    </source>
</evidence>
<evidence type="ECO:0000305" key="8"/>
<reference key="1">
    <citation type="journal article" date="2019" name="Comp. Biochem. Physiol.">
        <title>Isolation and sex steroid effects on the expression of the ATP-binding cassette transporter ABCB6 in Harderian glands of hamster (Mesocricetus auratus).</title>
        <authorList>
            <person name="Mares L."/>
            <person name="Vilchis F."/>
            <person name="Chavez B."/>
            <person name="Ramos L."/>
        </authorList>
    </citation>
    <scope>NUCLEOTIDE SEQUENCE [MRNA]</scope>
    <scope>TISSUE SPECIFICITY</scope>
</reference>
<proteinExistence type="evidence at transcript level"/>
<name>ABCB6_MESAU</name>
<keyword id="KW-0067">ATP-binding</keyword>
<keyword id="KW-1003">Cell membrane</keyword>
<keyword id="KW-1015">Disulfide bond</keyword>
<keyword id="KW-0256">Endoplasmic reticulum</keyword>
<keyword id="KW-0967">Endosome</keyword>
<keyword id="KW-0325">Glycoprotein</keyword>
<keyword id="KW-0333">Golgi apparatus</keyword>
<keyword id="KW-0458">Lysosome</keyword>
<keyword id="KW-0472">Membrane</keyword>
<keyword id="KW-0496">Mitochondrion</keyword>
<keyword id="KW-1000">Mitochondrion outer membrane</keyword>
<keyword id="KW-0547">Nucleotide-binding</keyword>
<keyword id="KW-1185">Reference proteome</keyword>
<keyword id="KW-0964">Secreted</keyword>
<keyword id="KW-1278">Translocase</keyword>
<keyword id="KW-0812">Transmembrane</keyword>
<keyword id="KW-1133">Transmembrane helix</keyword>
<keyword id="KW-0813">Transport</keyword>
<protein>
    <recommendedName>
        <fullName evidence="3">ATP-binding cassette sub-family B member 6</fullName>
    </recommendedName>
    <alternativeName>
        <fullName evidence="3">ABC-type heme transporter ABCB6</fullName>
        <ecNumber evidence="3">7.6.2.5</ecNumber>
    </alternativeName>
    <alternativeName>
        <fullName evidence="3">Mitochondrial ABC transporter 3</fullName>
        <shortName evidence="3">Mt-ABC transporter 3</shortName>
    </alternativeName>
    <alternativeName>
        <fullName>P-glycoprotein-related protein</fullName>
    </alternativeName>
    <alternativeName>
        <fullName>Ubiquitously-expressed mammalian ABC half transporter</fullName>
    </alternativeName>
</protein>
<comment type="function">
    <text evidence="1 3">ATP-dependent transporter that catalyzes the transport of a broad-spectrum of porphyrins from the cytoplasm to the extracellular space through the plasma membrane or into the vesicle lumen. May also function as an ATP-dependent importer of porphyrins from the cytoplasm into the mitochondria, in turn may participate in the de novo heme biosynthesis regulation and in the coordination of heme and iron homeostasis during phenylhydrazine stress. May also play a key role in the early steps of melanogenesis producing PMEL amyloid fibrils. In vitro, it confers to cells a resistance to toxic metal such as arsenic and cadmium and against chemotherapeutics agent such as 5-fluorouracil, SN-38 and vincristin (By similarity). In addition may play a role in the transition metal homeostasis (By similarity).</text>
</comment>
<comment type="catalytic activity">
    <reaction evidence="3">
        <text>heme b(in) + ATP + H2O = heme b(out) + ADP + phosphate + H(+)</text>
        <dbReference type="Rhea" id="RHEA:19261"/>
        <dbReference type="ChEBI" id="CHEBI:15377"/>
        <dbReference type="ChEBI" id="CHEBI:15378"/>
        <dbReference type="ChEBI" id="CHEBI:30616"/>
        <dbReference type="ChEBI" id="CHEBI:43474"/>
        <dbReference type="ChEBI" id="CHEBI:60344"/>
        <dbReference type="ChEBI" id="CHEBI:456216"/>
        <dbReference type="EC" id="7.6.2.5"/>
    </reaction>
    <physiologicalReaction direction="left-to-right" evidence="3">
        <dbReference type="Rhea" id="RHEA:19262"/>
    </physiologicalReaction>
</comment>
<comment type="catalytic activity">
    <reaction evidence="3">
        <text>coproporphyrin III(in) + ATP + H2O = coproporphyrin III(out) + ADP + phosphate + H(+)</text>
        <dbReference type="Rhea" id="RHEA:66664"/>
        <dbReference type="ChEBI" id="CHEBI:15377"/>
        <dbReference type="ChEBI" id="CHEBI:15378"/>
        <dbReference type="ChEBI" id="CHEBI:30616"/>
        <dbReference type="ChEBI" id="CHEBI:43474"/>
        <dbReference type="ChEBI" id="CHEBI:131725"/>
        <dbReference type="ChEBI" id="CHEBI:456216"/>
    </reaction>
    <physiologicalReaction direction="left-to-right" evidence="3">
        <dbReference type="Rhea" id="RHEA:66665"/>
    </physiologicalReaction>
</comment>
<comment type="catalytic activity">
    <reaction evidence="3">
        <text>pheophorbide a(in) + ATP + H2O = pheophorbide a(out) + ADP + phosphate + H(+)</text>
        <dbReference type="Rhea" id="RHEA:61360"/>
        <dbReference type="ChEBI" id="CHEBI:15377"/>
        <dbReference type="ChEBI" id="CHEBI:15378"/>
        <dbReference type="ChEBI" id="CHEBI:30616"/>
        <dbReference type="ChEBI" id="CHEBI:43474"/>
        <dbReference type="ChEBI" id="CHEBI:58687"/>
        <dbReference type="ChEBI" id="CHEBI:456216"/>
    </reaction>
    <physiologicalReaction direction="left-to-right" evidence="3">
        <dbReference type="Rhea" id="RHEA:61361"/>
    </physiologicalReaction>
</comment>
<comment type="catalytic activity">
    <reaction evidence="2">
        <text>coproporphyrinogen III(in) + ATP + H2O = coproporphyrinogen III(out) + ADP + phosphate + H(+)</text>
        <dbReference type="Rhea" id="RHEA:66680"/>
        <dbReference type="ChEBI" id="CHEBI:15377"/>
        <dbReference type="ChEBI" id="CHEBI:15378"/>
        <dbReference type="ChEBI" id="CHEBI:30616"/>
        <dbReference type="ChEBI" id="CHEBI:43474"/>
        <dbReference type="ChEBI" id="CHEBI:57309"/>
        <dbReference type="ChEBI" id="CHEBI:456216"/>
    </reaction>
    <physiologicalReaction direction="left-to-right" evidence="2">
        <dbReference type="Rhea" id="RHEA:66681"/>
    </physiologicalReaction>
</comment>
<comment type="catalytic activity">
    <reaction evidence="3">
        <text>protoporphyrin IX(in) + ATP + H2O = protoporphyrin IX(out) + ADP + phosphate + H(+)</text>
        <dbReference type="Rhea" id="RHEA:61336"/>
        <dbReference type="ChEBI" id="CHEBI:15377"/>
        <dbReference type="ChEBI" id="CHEBI:15378"/>
        <dbReference type="ChEBI" id="CHEBI:30616"/>
        <dbReference type="ChEBI" id="CHEBI:43474"/>
        <dbReference type="ChEBI" id="CHEBI:57306"/>
        <dbReference type="ChEBI" id="CHEBI:456216"/>
    </reaction>
    <physiologicalReaction direction="left-to-right" evidence="3">
        <dbReference type="Rhea" id="RHEA:61337"/>
    </physiologicalReaction>
</comment>
<comment type="catalytic activity">
    <reaction evidence="2">
        <text>coproporphyrin I(in) + ATP + H2O = coproporphyrin I(out) + ADP + phosphate + H(+)</text>
        <dbReference type="Rhea" id="RHEA:66768"/>
        <dbReference type="ChEBI" id="CHEBI:15377"/>
        <dbReference type="ChEBI" id="CHEBI:15378"/>
        <dbReference type="ChEBI" id="CHEBI:30616"/>
        <dbReference type="ChEBI" id="CHEBI:43474"/>
        <dbReference type="ChEBI" id="CHEBI:167478"/>
        <dbReference type="ChEBI" id="CHEBI:456216"/>
    </reaction>
    <physiologicalReaction direction="left-to-right" evidence="2">
        <dbReference type="Rhea" id="RHEA:66769"/>
    </physiologicalReaction>
</comment>
<comment type="catalytic activity">
    <reaction evidence="2">
        <text>uroporphyrin I(in) + ATP + H2O = uroporphyrin I(out) + ADP + phosphate + H(+)</text>
        <dbReference type="Rhea" id="RHEA:66772"/>
        <dbReference type="ChEBI" id="CHEBI:15377"/>
        <dbReference type="ChEBI" id="CHEBI:15378"/>
        <dbReference type="ChEBI" id="CHEBI:30616"/>
        <dbReference type="ChEBI" id="CHEBI:43474"/>
        <dbReference type="ChEBI" id="CHEBI:167480"/>
        <dbReference type="ChEBI" id="CHEBI:456216"/>
    </reaction>
    <physiologicalReaction direction="left-to-right" evidence="2">
        <dbReference type="Rhea" id="RHEA:66773"/>
    </physiologicalReaction>
</comment>
<comment type="catalytic activity">
    <reaction evidence="2">
        <text>uroporphyrin III(in) + ATP + H2O = uroporphyrin III(out) + ADP + phosphate + H(+)</text>
        <dbReference type="Rhea" id="RHEA:66776"/>
        <dbReference type="ChEBI" id="CHEBI:15377"/>
        <dbReference type="ChEBI" id="CHEBI:15378"/>
        <dbReference type="ChEBI" id="CHEBI:30616"/>
        <dbReference type="ChEBI" id="CHEBI:43474"/>
        <dbReference type="ChEBI" id="CHEBI:167479"/>
        <dbReference type="ChEBI" id="CHEBI:456216"/>
    </reaction>
    <physiologicalReaction direction="left-to-right" evidence="2">
        <dbReference type="Rhea" id="RHEA:66777"/>
    </physiologicalReaction>
</comment>
<comment type="subunit">
    <text evidence="3">Homodimer.</text>
</comment>
<comment type="subcellular location">
    <subcellularLocation>
        <location evidence="3">Cell membrane</location>
        <topology evidence="4">Multi-pass membrane protein</topology>
    </subcellularLocation>
    <subcellularLocation>
        <location evidence="3">Mitochondrion outer membrane</location>
        <topology evidence="4">Multi-pass membrane protein</topology>
    </subcellularLocation>
    <subcellularLocation>
        <location evidence="3">Endoplasmic reticulum membrane</location>
        <topology evidence="4">Multi-pass membrane protein</topology>
    </subcellularLocation>
    <subcellularLocation>
        <location evidence="3">Golgi apparatus membrane</location>
        <topology evidence="4">Multi-pass membrane protein</topology>
    </subcellularLocation>
    <subcellularLocation>
        <location evidence="3">Endosome membrane</location>
        <topology evidence="4">Multi-pass membrane protein</topology>
    </subcellularLocation>
    <subcellularLocation>
        <location evidence="3">Lysosome membrane</location>
    </subcellularLocation>
    <subcellularLocation>
        <location evidence="1">Late endosome membrane</location>
    </subcellularLocation>
    <subcellularLocation>
        <location evidence="1">Early endosome membrane</location>
    </subcellularLocation>
    <subcellularLocation>
        <location evidence="3">Secreted</location>
        <location evidence="3">Extracellular exosome</location>
    </subcellularLocation>
    <subcellularLocation>
        <location evidence="3">Mitochondrion</location>
    </subcellularLocation>
    <subcellularLocation>
        <location evidence="3">Endosome</location>
        <location evidence="3">Multivesicular body membrane</location>
    </subcellularLocation>
    <subcellularLocation>
        <location evidence="3">Melanosome membrane</location>
    </subcellularLocation>
    <text evidence="1 3">Present in the membrane of mature erythrocytes and in exosomes released from reticulocytes during the final steps of erythroid maturation. Traffics from endoplasmic reticulum to Golgi during its glycans's maturation, therefrom is first targeted to the plasma membrane, and is rapidly internalized through endocytosis to be distributed to the limiting membrane of multivesicular bodies and lysosomes. Localized on the limiting membrane of early melanosomes of pigment cells (By similarity). Targeted to the endolysosomal compartment (By similarity).</text>
</comment>
<comment type="tissue specificity">
    <text evidence="7">Highly expressed in the liver, adrenal glands, and testis.</text>
</comment>
<comment type="domain">
    <text evidence="3">Contains two independently folding units, the N-terminal transmembrane domain (residues 1-205) and the ABC-core domain (206-842) are respectively responsible for the lysosomal targeting and the ATPase activity.</text>
</comment>
<comment type="PTM">
    <text evidence="3">N-glycosylated.</text>
</comment>
<comment type="similarity">
    <text evidence="8">Belongs to the ABC transporter superfamily. ABCB family. Heavy Metal importer (TC 3.A.1.210) subfamily.</text>
</comment>
<comment type="caution">
    <text evidence="3">To date, the intracellular localization of ABCB6 is a matter of debate, with conflicting reports suggesting mitochondrial or endolysosomal localization, therefore questioning the requirement of ABCB6 in the mitochondrial import of porphyrins.</text>
</comment>
<gene>
    <name evidence="3" type="primary">ABCB6</name>
</gene>